<keyword id="KW-0997">Cell inner membrane</keyword>
<keyword id="KW-1003">Cell membrane</keyword>
<keyword id="KW-0963">Cytoplasm</keyword>
<keyword id="KW-0342">GTP-binding</keyword>
<keyword id="KW-0472">Membrane</keyword>
<keyword id="KW-0547">Nucleotide-binding</keyword>
<keyword id="KW-1185">Reference proteome</keyword>
<keyword id="KW-0690">Ribosome biogenesis</keyword>
<keyword id="KW-0694">RNA-binding</keyword>
<keyword id="KW-0699">rRNA-binding</keyword>
<evidence type="ECO:0000255" key="1">
    <source>
        <dbReference type="HAMAP-Rule" id="MF_00367"/>
    </source>
</evidence>
<evidence type="ECO:0000255" key="2">
    <source>
        <dbReference type="PROSITE-ProRule" id="PRU01050"/>
    </source>
</evidence>
<comment type="function">
    <text evidence="1">An essential GTPase that binds both GDP and GTP, with rapid nucleotide exchange. Plays a role in 16S rRNA processing and 30S ribosomal subunit biogenesis and possibly also in cell cycle regulation and energy metabolism.</text>
</comment>
<comment type="subunit">
    <text evidence="1">Monomer.</text>
</comment>
<comment type="subcellular location">
    <subcellularLocation>
        <location>Cytoplasm</location>
    </subcellularLocation>
    <subcellularLocation>
        <location evidence="1">Cell inner membrane</location>
        <topology evidence="1">Peripheral membrane protein</topology>
    </subcellularLocation>
</comment>
<comment type="similarity">
    <text evidence="1 2">Belongs to the TRAFAC class TrmE-Era-EngA-EngB-Septin-like GTPase superfamily. Era GTPase family.</text>
</comment>
<feature type="chain" id="PRO_1000189963" description="GTPase Era">
    <location>
        <begin position="1"/>
        <end position="300"/>
    </location>
</feature>
<feature type="domain" description="Era-type G" evidence="2">
    <location>
        <begin position="7"/>
        <end position="175"/>
    </location>
</feature>
<feature type="domain" description="KH type-2" evidence="1">
    <location>
        <begin position="206"/>
        <end position="283"/>
    </location>
</feature>
<feature type="region of interest" description="G1" evidence="2">
    <location>
        <begin position="15"/>
        <end position="22"/>
    </location>
</feature>
<feature type="region of interest" description="G2" evidence="2">
    <location>
        <begin position="41"/>
        <end position="45"/>
    </location>
</feature>
<feature type="region of interest" description="G3" evidence="2">
    <location>
        <begin position="62"/>
        <end position="65"/>
    </location>
</feature>
<feature type="region of interest" description="G4" evidence="2">
    <location>
        <begin position="124"/>
        <end position="127"/>
    </location>
</feature>
<feature type="region of interest" description="G5" evidence="2">
    <location>
        <begin position="154"/>
        <end position="156"/>
    </location>
</feature>
<feature type="binding site" evidence="1">
    <location>
        <begin position="15"/>
        <end position="22"/>
    </location>
    <ligand>
        <name>GTP</name>
        <dbReference type="ChEBI" id="CHEBI:37565"/>
    </ligand>
</feature>
<feature type="binding site" evidence="1">
    <location>
        <begin position="62"/>
        <end position="66"/>
    </location>
    <ligand>
        <name>GTP</name>
        <dbReference type="ChEBI" id="CHEBI:37565"/>
    </ligand>
</feature>
<feature type="binding site" evidence="1">
    <location>
        <begin position="124"/>
        <end position="127"/>
    </location>
    <ligand>
        <name>GTP</name>
        <dbReference type="ChEBI" id="CHEBI:37565"/>
    </ligand>
</feature>
<reference key="1">
    <citation type="journal article" date="2009" name="J. Bacteriol.">
        <title>Complete genome sequence of Haemophilus parasuis SH0165.</title>
        <authorList>
            <person name="Yue M."/>
            <person name="Yang F."/>
            <person name="Yang J."/>
            <person name="Bei W."/>
            <person name="Cai X."/>
            <person name="Chen L."/>
            <person name="Dong J."/>
            <person name="Zhou R."/>
            <person name="Jin M."/>
            <person name="Jin Q."/>
            <person name="Chen H."/>
        </authorList>
    </citation>
    <scope>NUCLEOTIDE SEQUENCE [LARGE SCALE GENOMIC DNA]</scope>
    <source>
        <strain>SH0165</strain>
    </source>
</reference>
<organism>
    <name type="scientific">Glaesserella parasuis serovar 5 (strain SH0165)</name>
    <name type="common">Haemophilus parasuis</name>
    <dbReference type="NCBI Taxonomy" id="557723"/>
    <lineage>
        <taxon>Bacteria</taxon>
        <taxon>Pseudomonadati</taxon>
        <taxon>Pseudomonadota</taxon>
        <taxon>Gammaproteobacteria</taxon>
        <taxon>Pasteurellales</taxon>
        <taxon>Pasteurellaceae</taxon>
        <taxon>Glaesserella</taxon>
    </lineage>
</organism>
<proteinExistence type="inferred from homology"/>
<gene>
    <name evidence="1" type="primary">era</name>
    <name type="ordered locus">HAPS_0131</name>
</gene>
<name>ERA_GLAP5</name>
<sequence>MTDQKTYCGFIAIVGRPNVGKSTLLNKILGQKISITSRKAQTTRHRILGIKTEGAYQEIYVDTPGLHIEEKRAINRLMNRAAASAIGDVDMVIFVVEGTKWTDDDEMVLNKLRSTKAPVILAINKVDNIKEKEELLPHLTALSQKFPFKEIIPISAQRGKNVHILEKFVRESLKEGIHHYPEDYVTDRSQRFMASEIIREKLMRFMGEELPYSVTVEIEQFKTNERGTYEINGLILVEREGQKKMVIGNKGQKIKVIGTEARADMERLFDNKVHLELWVKVKAGWADDERALRSLGYIDE</sequence>
<dbReference type="EMBL" id="CP001321">
    <property type="protein sequence ID" value="ACL31830.1"/>
    <property type="molecule type" value="Genomic_DNA"/>
</dbReference>
<dbReference type="RefSeq" id="WP_005711218.1">
    <property type="nucleotide sequence ID" value="NC_011852.1"/>
</dbReference>
<dbReference type="SMR" id="B8F3C8"/>
<dbReference type="STRING" id="557723.HAPS_0131"/>
<dbReference type="GeneID" id="66618523"/>
<dbReference type="KEGG" id="hap:HAPS_0131"/>
<dbReference type="HOGENOM" id="CLU_038009_1_0_6"/>
<dbReference type="Proteomes" id="UP000006743">
    <property type="component" value="Chromosome"/>
</dbReference>
<dbReference type="GO" id="GO:0005829">
    <property type="term" value="C:cytosol"/>
    <property type="evidence" value="ECO:0007669"/>
    <property type="project" value="TreeGrafter"/>
</dbReference>
<dbReference type="GO" id="GO:0005886">
    <property type="term" value="C:plasma membrane"/>
    <property type="evidence" value="ECO:0007669"/>
    <property type="project" value="UniProtKB-SubCell"/>
</dbReference>
<dbReference type="GO" id="GO:0005525">
    <property type="term" value="F:GTP binding"/>
    <property type="evidence" value="ECO:0007669"/>
    <property type="project" value="UniProtKB-UniRule"/>
</dbReference>
<dbReference type="GO" id="GO:0003924">
    <property type="term" value="F:GTPase activity"/>
    <property type="evidence" value="ECO:0007669"/>
    <property type="project" value="UniProtKB-UniRule"/>
</dbReference>
<dbReference type="GO" id="GO:0043024">
    <property type="term" value="F:ribosomal small subunit binding"/>
    <property type="evidence" value="ECO:0007669"/>
    <property type="project" value="TreeGrafter"/>
</dbReference>
<dbReference type="GO" id="GO:0070181">
    <property type="term" value="F:small ribosomal subunit rRNA binding"/>
    <property type="evidence" value="ECO:0007669"/>
    <property type="project" value="UniProtKB-UniRule"/>
</dbReference>
<dbReference type="GO" id="GO:0000028">
    <property type="term" value="P:ribosomal small subunit assembly"/>
    <property type="evidence" value="ECO:0007669"/>
    <property type="project" value="TreeGrafter"/>
</dbReference>
<dbReference type="CDD" id="cd04163">
    <property type="entry name" value="Era"/>
    <property type="match status" value="1"/>
</dbReference>
<dbReference type="CDD" id="cd22534">
    <property type="entry name" value="KH-II_Era"/>
    <property type="match status" value="1"/>
</dbReference>
<dbReference type="FunFam" id="3.30.300.20:FF:000003">
    <property type="entry name" value="GTPase Era"/>
    <property type="match status" value="1"/>
</dbReference>
<dbReference type="FunFam" id="3.40.50.300:FF:000094">
    <property type="entry name" value="GTPase Era"/>
    <property type="match status" value="1"/>
</dbReference>
<dbReference type="Gene3D" id="3.30.300.20">
    <property type="match status" value="1"/>
</dbReference>
<dbReference type="Gene3D" id="3.40.50.300">
    <property type="entry name" value="P-loop containing nucleotide triphosphate hydrolases"/>
    <property type="match status" value="1"/>
</dbReference>
<dbReference type="HAMAP" id="MF_00367">
    <property type="entry name" value="GTPase_Era"/>
    <property type="match status" value="1"/>
</dbReference>
<dbReference type="InterPro" id="IPR030388">
    <property type="entry name" value="G_ERA_dom"/>
</dbReference>
<dbReference type="InterPro" id="IPR006073">
    <property type="entry name" value="GTP-bd"/>
</dbReference>
<dbReference type="InterPro" id="IPR005662">
    <property type="entry name" value="GTPase_Era-like"/>
</dbReference>
<dbReference type="InterPro" id="IPR015946">
    <property type="entry name" value="KH_dom-like_a/b"/>
</dbReference>
<dbReference type="InterPro" id="IPR004044">
    <property type="entry name" value="KH_dom_type_2"/>
</dbReference>
<dbReference type="InterPro" id="IPR009019">
    <property type="entry name" value="KH_sf_prok-type"/>
</dbReference>
<dbReference type="InterPro" id="IPR027417">
    <property type="entry name" value="P-loop_NTPase"/>
</dbReference>
<dbReference type="InterPro" id="IPR005225">
    <property type="entry name" value="Small_GTP-bd"/>
</dbReference>
<dbReference type="NCBIfam" id="TIGR00436">
    <property type="entry name" value="era"/>
    <property type="match status" value="1"/>
</dbReference>
<dbReference type="NCBIfam" id="NF000908">
    <property type="entry name" value="PRK00089.1"/>
    <property type="match status" value="1"/>
</dbReference>
<dbReference type="NCBIfam" id="TIGR00231">
    <property type="entry name" value="small_GTP"/>
    <property type="match status" value="1"/>
</dbReference>
<dbReference type="PANTHER" id="PTHR42698">
    <property type="entry name" value="GTPASE ERA"/>
    <property type="match status" value="1"/>
</dbReference>
<dbReference type="PANTHER" id="PTHR42698:SF1">
    <property type="entry name" value="GTPASE ERA, MITOCHONDRIAL"/>
    <property type="match status" value="1"/>
</dbReference>
<dbReference type="Pfam" id="PF07650">
    <property type="entry name" value="KH_2"/>
    <property type="match status" value="1"/>
</dbReference>
<dbReference type="Pfam" id="PF01926">
    <property type="entry name" value="MMR_HSR1"/>
    <property type="match status" value="1"/>
</dbReference>
<dbReference type="PRINTS" id="PR00326">
    <property type="entry name" value="GTP1OBG"/>
</dbReference>
<dbReference type="SUPFAM" id="SSF52540">
    <property type="entry name" value="P-loop containing nucleoside triphosphate hydrolases"/>
    <property type="match status" value="1"/>
</dbReference>
<dbReference type="SUPFAM" id="SSF54814">
    <property type="entry name" value="Prokaryotic type KH domain (KH-domain type II)"/>
    <property type="match status" value="1"/>
</dbReference>
<dbReference type="PROSITE" id="PS51713">
    <property type="entry name" value="G_ERA"/>
    <property type="match status" value="1"/>
</dbReference>
<dbReference type="PROSITE" id="PS50823">
    <property type="entry name" value="KH_TYPE_2"/>
    <property type="match status" value="1"/>
</dbReference>
<protein>
    <recommendedName>
        <fullName evidence="1">GTPase Era</fullName>
    </recommendedName>
</protein>
<accession>B8F3C8</accession>